<evidence type="ECO:0000255" key="1">
    <source>
        <dbReference type="HAMAP-Rule" id="MF_01274"/>
    </source>
</evidence>
<feature type="chain" id="PRO_1000054402" description="Type III pantothenate kinase">
    <location>
        <begin position="1"/>
        <end position="249"/>
    </location>
</feature>
<feature type="active site" description="Proton acceptor" evidence="1">
    <location>
        <position position="102"/>
    </location>
</feature>
<feature type="binding site" evidence="1">
    <location>
        <begin position="6"/>
        <end position="13"/>
    </location>
    <ligand>
        <name>ATP</name>
        <dbReference type="ChEBI" id="CHEBI:30616"/>
    </ligand>
</feature>
<feature type="binding site" evidence="1">
    <location>
        <position position="93"/>
    </location>
    <ligand>
        <name>substrate</name>
    </ligand>
</feature>
<feature type="binding site" evidence="1">
    <location>
        <begin position="100"/>
        <end position="103"/>
    </location>
    <ligand>
        <name>substrate</name>
    </ligand>
</feature>
<feature type="binding site" evidence="1">
    <location>
        <position position="122"/>
    </location>
    <ligand>
        <name>K(+)</name>
        <dbReference type="ChEBI" id="CHEBI:29103"/>
    </ligand>
</feature>
<feature type="binding site" evidence="1">
    <location>
        <position position="125"/>
    </location>
    <ligand>
        <name>ATP</name>
        <dbReference type="ChEBI" id="CHEBI:30616"/>
    </ligand>
</feature>
<feature type="binding site" evidence="1">
    <location>
        <position position="181"/>
    </location>
    <ligand>
        <name>substrate</name>
    </ligand>
</feature>
<accession>A6UZH2</accession>
<protein>
    <recommendedName>
        <fullName evidence="1">Type III pantothenate kinase</fullName>
        <ecNumber evidence="1">2.7.1.33</ecNumber>
    </recommendedName>
    <alternativeName>
        <fullName evidence="1">PanK-III</fullName>
    </alternativeName>
    <alternativeName>
        <fullName evidence="1">Pantothenic acid kinase</fullName>
    </alternativeName>
</protein>
<dbReference type="EC" id="2.7.1.33" evidence="1"/>
<dbReference type="EMBL" id="CP000744">
    <property type="protein sequence ID" value="ABR84119.1"/>
    <property type="molecule type" value="Genomic_DNA"/>
</dbReference>
<dbReference type="RefSeq" id="WP_012074225.1">
    <property type="nucleotide sequence ID" value="NC_009656.1"/>
</dbReference>
<dbReference type="SMR" id="A6UZH2"/>
<dbReference type="KEGG" id="pap:PSPA7_0817"/>
<dbReference type="HOGENOM" id="CLU_066627_0_1_6"/>
<dbReference type="UniPathway" id="UPA00241">
    <property type="reaction ID" value="UER00352"/>
</dbReference>
<dbReference type="Proteomes" id="UP000001582">
    <property type="component" value="Chromosome"/>
</dbReference>
<dbReference type="GO" id="GO:0005737">
    <property type="term" value="C:cytoplasm"/>
    <property type="evidence" value="ECO:0007669"/>
    <property type="project" value="UniProtKB-SubCell"/>
</dbReference>
<dbReference type="GO" id="GO:0005524">
    <property type="term" value="F:ATP binding"/>
    <property type="evidence" value="ECO:0007669"/>
    <property type="project" value="UniProtKB-UniRule"/>
</dbReference>
<dbReference type="GO" id="GO:0046872">
    <property type="term" value="F:metal ion binding"/>
    <property type="evidence" value="ECO:0007669"/>
    <property type="project" value="UniProtKB-KW"/>
</dbReference>
<dbReference type="GO" id="GO:0004594">
    <property type="term" value="F:pantothenate kinase activity"/>
    <property type="evidence" value="ECO:0007669"/>
    <property type="project" value="UniProtKB-UniRule"/>
</dbReference>
<dbReference type="GO" id="GO:0015937">
    <property type="term" value="P:coenzyme A biosynthetic process"/>
    <property type="evidence" value="ECO:0007669"/>
    <property type="project" value="UniProtKB-UniRule"/>
</dbReference>
<dbReference type="CDD" id="cd24015">
    <property type="entry name" value="ASKHA_NBD_PanK-III"/>
    <property type="match status" value="1"/>
</dbReference>
<dbReference type="Gene3D" id="3.30.420.40">
    <property type="match status" value="2"/>
</dbReference>
<dbReference type="HAMAP" id="MF_01274">
    <property type="entry name" value="Pantothen_kinase_3"/>
    <property type="match status" value="1"/>
</dbReference>
<dbReference type="InterPro" id="IPR043129">
    <property type="entry name" value="ATPase_NBD"/>
</dbReference>
<dbReference type="InterPro" id="IPR004619">
    <property type="entry name" value="Type_III_PanK"/>
</dbReference>
<dbReference type="NCBIfam" id="TIGR00671">
    <property type="entry name" value="baf"/>
    <property type="match status" value="1"/>
</dbReference>
<dbReference type="NCBIfam" id="NF009857">
    <property type="entry name" value="PRK13322.1-2"/>
    <property type="match status" value="1"/>
</dbReference>
<dbReference type="NCBIfam" id="NF009859">
    <property type="entry name" value="PRK13322.1-4"/>
    <property type="match status" value="1"/>
</dbReference>
<dbReference type="PANTHER" id="PTHR34265">
    <property type="entry name" value="TYPE III PANTOTHENATE KINASE"/>
    <property type="match status" value="1"/>
</dbReference>
<dbReference type="PANTHER" id="PTHR34265:SF1">
    <property type="entry name" value="TYPE III PANTOTHENATE KINASE"/>
    <property type="match status" value="1"/>
</dbReference>
<dbReference type="Pfam" id="PF03309">
    <property type="entry name" value="Pan_kinase"/>
    <property type="match status" value="1"/>
</dbReference>
<dbReference type="SUPFAM" id="SSF53067">
    <property type="entry name" value="Actin-like ATPase domain"/>
    <property type="match status" value="2"/>
</dbReference>
<keyword id="KW-0067">ATP-binding</keyword>
<keyword id="KW-0173">Coenzyme A biosynthesis</keyword>
<keyword id="KW-0963">Cytoplasm</keyword>
<keyword id="KW-0418">Kinase</keyword>
<keyword id="KW-0479">Metal-binding</keyword>
<keyword id="KW-0547">Nucleotide-binding</keyword>
<keyword id="KW-0630">Potassium</keyword>
<keyword id="KW-0808">Transferase</keyword>
<sequence>MILELDCGNSLIKWRVIDGGGGRSVAGGLADSDEALVEQLSLRRGLPVRACRLVSVRSEQETSQLIARLERLFPVSVLVAAPGRQLAGVRNGYLDYQRLGLDRWLALVAGHHLAQKACLVIDLGTAVTSDLVAANGTHLGGYICPGMSLMRSQLRTHTRRIRYDDTEARRAMGSLHPGQATAEAVERGCLLMLRGFVREQYAMACELLGADCEIFLTGGDAELVRDELARARIIPDLVFVGLALACPIE</sequence>
<reference key="1">
    <citation type="submission" date="2007-06" db="EMBL/GenBank/DDBJ databases">
        <authorList>
            <person name="Dodson R.J."/>
            <person name="Harkins D."/>
            <person name="Paulsen I.T."/>
        </authorList>
    </citation>
    <scope>NUCLEOTIDE SEQUENCE [LARGE SCALE GENOMIC DNA]</scope>
    <source>
        <strain>DSM 24068 / PA7</strain>
    </source>
</reference>
<gene>
    <name evidence="1" type="primary">coaX</name>
    <name type="ordered locus">PSPA7_0817</name>
</gene>
<name>COAX_PSEP7</name>
<organism>
    <name type="scientific">Pseudomonas paraeruginosa (strain DSM 24068 / PA7)</name>
    <name type="common">Pseudomonas aeruginosa (strain PA7)</name>
    <dbReference type="NCBI Taxonomy" id="381754"/>
    <lineage>
        <taxon>Bacteria</taxon>
        <taxon>Pseudomonadati</taxon>
        <taxon>Pseudomonadota</taxon>
        <taxon>Gammaproteobacteria</taxon>
        <taxon>Pseudomonadales</taxon>
        <taxon>Pseudomonadaceae</taxon>
        <taxon>Pseudomonas</taxon>
        <taxon>Pseudomonas paraeruginosa</taxon>
    </lineage>
</organism>
<proteinExistence type="inferred from homology"/>
<comment type="function">
    <text evidence="1">Catalyzes the phosphorylation of pantothenate (Pan), the first step in CoA biosynthesis.</text>
</comment>
<comment type="catalytic activity">
    <reaction evidence="1">
        <text>(R)-pantothenate + ATP = (R)-4'-phosphopantothenate + ADP + H(+)</text>
        <dbReference type="Rhea" id="RHEA:16373"/>
        <dbReference type="ChEBI" id="CHEBI:10986"/>
        <dbReference type="ChEBI" id="CHEBI:15378"/>
        <dbReference type="ChEBI" id="CHEBI:29032"/>
        <dbReference type="ChEBI" id="CHEBI:30616"/>
        <dbReference type="ChEBI" id="CHEBI:456216"/>
        <dbReference type="EC" id="2.7.1.33"/>
    </reaction>
</comment>
<comment type="cofactor">
    <cofactor evidence="1">
        <name>NH4(+)</name>
        <dbReference type="ChEBI" id="CHEBI:28938"/>
    </cofactor>
    <cofactor evidence="1">
        <name>K(+)</name>
        <dbReference type="ChEBI" id="CHEBI:29103"/>
    </cofactor>
    <text evidence="1">A monovalent cation. Ammonium or potassium.</text>
</comment>
<comment type="pathway">
    <text evidence="1">Cofactor biosynthesis; coenzyme A biosynthesis; CoA from (R)-pantothenate: step 1/5.</text>
</comment>
<comment type="subunit">
    <text evidence="1">Homodimer.</text>
</comment>
<comment type="subcellular location">
    <subcellularLocation>
        <location evidence="1">Cytoplasm</location>
    </subcellularLocation>
</comment>
<comment type="similarity">
    <text evidence="1">Belongs to the type III pantothenate kinase family.</text>
</comment>